<sequence>MKNYPVKKNDVIEVEIIDLTHEGLGVAKVDHYPLFIENALPGEKLEIKVLKTGKSFGYGKVLTVLKSSEQRVPVKDENFTKVGISPLQHLAYGAQLSFKTQQVENVMQRVAKLQEVPVLPTIGMNDPWHYRNKAQIPVRKIDNQLQTGFFRKNSHDLIPMEHFYIQDPEIDAAIVKIRDIMRKYSVKPYNESDNTGNLRHIVVRRGYHTGEMMVVLITRTPKLFPISKIVPDILEAIPEVVSIVQNVNPKRTNVIFGDETILLHGSEKITDTIFDLKFEISARSFYQVNPQQTEVMYQKVKEYAALTGNEIVVDAYCGIGTIGLTLAQDAKQVYGIEVIEEAVKDAENNAKLNNIENATFTAGLAEELLPKLVENGLQPDVVVVDPPRKGLDGQLVNTLIETQPERIVYVSCNPATLARDIALLTEGGYEAKEIQPVDNFPQTTHIESVTLLTKAVD</sequence>
<reference key="1">
    <citation type="journal article" date="2003" name="Science">
        <title>Role of mobile DNA in the evolution of vancomycin-resistant Enterococcus faecalis.</title>
        <authorList>
            <person name="Paulsen I.T."/>
            <person name="Banerjei L."/>
            <person name="Myers G.S.A."/>
            <person name="Nelson K.E."/>
            <person name="Seshadri R."/>
            <person name="Read T.D."/>
            <person name="Fouts D.E."/>
            <person name="Eisen J.A."/>
            <person name="Gill S.R."/>
            <person name="Heidelberg J.F."/>
            <person name="Tettelin H."/>
            <person name="Dodson R.J."/>
            <person name="Umayam L.A."/>
            <person name="Brinkac L.M."/>
            <person name="Beanan M.J."/>
            <person name="Daugherty S.C."/>
            <person name="DeBoy R.T."/>
            <person name="Durkin S.A."/>
            <person name="Kolonay J.F."/>
            <person name="Madupu R."/>
            <person name="Nelson W.C."/>
            <person name="Vamathevan J.J."/>
            <person name="Tran B."/>
            <person name="Upton J."/>
            <person name="Hansen T."/>
            <person name="Shetty J."/>
            <person name="Khouri H.M."/>
            <person name="Utterback T.R."/>
            <person name="Radune D."/>
            <person name="Ketchum K.A."/>
            <person name="Dougherty B.A."/>
            <person name="Fraser C.M."/>
        </authorList>
    </citation>
    <scope>NUCLEOTIDE SEQUENCE [LARGE SCALE GENOMIC DNA]</scope>
    <source>
        <strain>ATCC 700802 / V583</strain>
    </source>
</reference>
<proteinExistence type="inferred from homology"/>
<accession>Q837V0</accession>
<feature type="chain" id="PRO_0000161978" description="Uncharacterized RNA methyltransferase EF_0728">
    <location>
        <begin position="1"/>
        <end position="457"/>
    </location>
</feature>
<feature type="domain" description="TRAM" evidence="1">
    <location>
        <begin position="5"/>
        <end position="63"/>
    </location>
</feature>
<feature type="active site" description="Nucleophile" evidence="2">
    <location>
        <position position="412"/>
    </location>
</feature>
<feature type="binding site" evidence="2">
    <location>
        <position position="287"/>
    </location>
    <ligand>
        <name>S-adenosyl-L-methionine</name>
        <dbReference type="ChEBI" id="CHEBI:59789"/>
    </ligand>
</feature>
<feature type="binding site" evidence="2">
    <location>
        <position position="316"/>
    </location>
    <ligand>
        <name>S-adenosyl-L-methionine</name>
        <dbReference type="ChEBI" id="CHEBI:59789"/>
    </ligand>
</feature>
<feature type="binding site" evidence="2">
    <location>
        <position position="337"/>
    </location>
    <ligand>
        <name>S-adenosyl-L-methionine</name>
        <dbReference type="ChEBI" id="CHEBI:59789"/>
    </ligand>
</feature>
<feature type="binding site" evidence="2">
    <location>
        <position position="385"/>
    </location>
    <ligand>
        <name>S-adenosyl-L-methionine</name>
        <dbReference type="ChEBI" id="CHEBI:59789"/>
    </ligand>
</feature>
<organism>
    <name type="scientific">Enterococcus faecalis (strain ATCC 700802 / V583)</name>
    <dbReference type="NCBI Taxonomy" id="226185"/>
    <lineage>
        <taxon>Bacteria</taxon>
        <taxon>Bacillati</taxon>
        <taxon>Bacillota</taxon>
        <taxon>Bacilli</taxon>
        <taxon>Lactobacillales</taxon>
        <taxon>Enterococcaceae</taxon>
        <taxon>Enterococcus</taxon>
    </lineage>
</organism>
<gene>
    <name type="ordered locus">EF_0728</name>
</gene>
<evidence type="ECO:0000255" key="1">
    <source>
        <dbReference type="PROSITE-ProRule" id="PRU00208"/>
    </source>
</evidence>
<evidence type="ECO:0000255" key="2">
    <source>
        <dbReference type="PROSITE-ProRule" id="PRU01024"/>
    </source>
</evidence>
<dbReference type="EC" id="2.1.1.-"/>
<dbReference type="EMBL" id="AE016830">
    <property type="protein sequence ID" value="AAO80548.1"/>
    <property type="molecule type" value="Genomic_DNA"/>
</dbReference>
<dbReference type="RefSeq" id="NP_814478.1">
    <property type="nucleotide sequence ID" value="NC_004668.1"/>
</dbReference>
<dbReference type="SMR" id="Q837V0"/>
<dbReference type="STRING" id="226185.EF_0728"/>
<dbReference type="EnsemblBacteria" id="AAO80548">
    <property type="protein sequence ID" value="AAO80548"/>
    <property type="gene ID" value="EF_0728"/>
</dbReference>
<dbReference type="KEGG" id="efa:EF0728"/>
<dbReference type="PATRIC" id="fig|226185.45.peg.2669"/>
<dbReference type="eggNOG" id="COG2265">
    <property type="taxonomic scope" value="Bacteria"/>
</dbReference>
<dbReference type="HOGENOM" id="CLU_014689_7_0_9"/>
<dbReference type="Proteomes" id="UP000001415">
    <property type="component" value="Chromosome"/>
</dbReference>
<dbReference type="GO" id="GO:0070041">
    <property type="term" value="F:rRNA (uridine-C5-)-methyltransferase activity"/>
    <property type="evidence" value="ECO:0007669"/>
    <property type="project" value="TreeGrafter"/>
</dbReference>
<dbReference type="GO" id="GO:0070475">
    <property type="term" value="P:rRNA base methylation"/>
    <property type="evidence" value="ECO:0007669"/>
    <property type="project" value="TreeGrafter"/>
</dbReference>
<dbReference type="CDD" id="cd02440">
    <property type="entry name" value="AdoMet_MTases"/>
    <property type="match status" value="1"/>
</dbReference>
<dbReference type="FunFam" id="3.40.50.150:FF:000009">
    <property type="entry name" value="23S rRNA (Uracil(1939)-C(5))-methyltransferase RlmD"/>
    <property type="match status" value="1"/>
</dbReference>
<dbReference type="FunFam" id="2.40.50.1070:FF:000003">
    <property type="entry name" value="23S rRNA (Uracil-5-)-methyltransferase RumA"/>
    <property type="match status" value="1"/>
</dbReference>
<dbReference type="Gene3D" id="2.40.50.1070">
    <property type="match status" value="1"/>
</dbReference>
<dbReference type="Gene3D" id="2.40.50.140">
    <property type="entry name" value="Nucleic acid-binding proteins"/>
    <property type="match status" value="1"/>
</dbReference>
<dbReference type="Gene3D" id="3.40.50.150">
    <property type="entry name" value="Vaccinia Virus protein VP39"/>
    <property type="match status" value="1"/>
</dbReference>
<dbReference type="InterPro" id="IPR030390">
    <property type="entry name" value="MeTrfase_TrmA_AS"/>
</dbReference>
<dbReference type="InterPro" id="IPR030391">
    <property type="entry name" value="MeTrfase_TrmA_CS"/>
</dbReference>
<dbReference type="InterPro" id="IPR012340">
    <property type="entry name" value="NA-bd_OB-fold"/>
</dbReference>
<dbReference type="InterPro" id="IPR029063">
    <property type="entry name" value="SAM-dependent_MTases_sf"/>
</dbReference>
<dbReference type="InterPro" id="IPR002792">
    <property type="entry name" value="TRAM_dom"/>
</dbReference>
<dbReference type="InterPro" id="IPR010280">
    <property type="entry name" value="U5_MeTrfase_fam"/>
</dbReference>
<dbReference type="NCBIfam" id="TIGR00479">
    <property type="entry name" value="rumA"/>
    <property type="match status" value="1"/>
</dbReference>
<dbReference type="PANTHER" id="PTHR11061">
    <property type="entry name" value="RNA M5U METHYLTRANSFERASE"/>
    <property type="match status" value="1"/>
</dbReference>
<dbReference type="PANTHER" id="PTHR11061:SF30">
    <property type="entry name" value="TRNA (URACIL(54)-C(5))-METHYLTRANSFERASE"/>
    <property type="match status" value="1"/>
</dbReference>
<dbReference type="Pfam" id="PF01938">
    <property type="entry name" value="TRAM"/>
    <property type="match status" value="1"/>
</dbReference>
<dbReference type="Pfam" id="PF05958">
    <property type="entry name" value="tRNA_U5-meth_tr"/>
    <property type="match status" value="1"/>
</dbReference>
<dbReference type="SUPFAM" id="SSF50249">
    <property type="entry name" value="Nucleic acid-binding proteins"/>
    <property type="match status" value="1"/>
</dbReference>
<dbReference type="SUPFAM" id="SSF53335">
    <property type="entry name" value="S-adenosyl-L-methionine-dependent methyltransferases"/>
    <property type="match status" value="1"/>
</dbReference>
<dbReference type="PROSITE" id="PS51687">
    <property type="entry name" value="SAM_MT_RNA_M5U"/>
    <property type="match status" value="1"/>
</dbReference>
<dbReference type="PROSITE" id="PS50926">
    <property type="entry name" value="TRAM"/>
    <property type="match status" value="1"/>
</dbReference>
<dbReference type="PROSITE" id="PS01230">
    <property type="entry name" value="TRMA_1"/>
    <property type="match status" value="1"/>
</dbReference>
<dbReference type="PROSITE" id="PS01231">
    <property type="entry name" value="TRMA_2"/>
    <property type="match status" value="1"/>
</dbReference>
<keyword id="KW-0489">Methyltransferase</keyword>
<keyword id="KW-1185">Reference proteome</keyword>
<keyword id="KW-0949">S-adenosyl-L-methionine</keyword>
<keyword id="KW-0808">Transferase</keyword>
<comment type="similarity">
    <text evidence="2">Belongs to the class I-like SAM-binding methyltransferase superfamily. RNA M5U methyltransferase family.</text>
</comment>
<protein>
    <recommendedName>
        <fullName>Uncharacterized RNA methyltransferase EF_0728</fullName>
        <ecNumber>2.1.1.-</ecNumber>
    </recommendedName>
</protein>
<name>Y728_ENTFA</name>